<organism>
    <name type="scientific">Californiconus californicus</name>
    <name type="common">California cone</name>
    <name type="synonym">Conus californicus</name>
    <dbReference type="NCBI Taxonomy" id="1736779"/>
    <lineage>
        <taxon>Eukaryota</taxon>
        <taxon>Metazoa</taxon>
        <taxon>Spiralia</taxon>
        <taxon>Lophotrochozoa</taxon>
        <taxon>Mollusca</taxon>
        <taxon>Gastropoda</taxon>
        <taxon>Caenogastropoda</taxon>
        <taxon>Neogastropoda</taxon>
        <taxon>Conoidea</taxon>
        <taxon>Conidae</taxon>
        <taxon>Californiconus</taxon>
    </lineage>
</organism>
<feature type="propeptide" id="PRO_0000414939" evidence="3">
    <location>
        <begin position="1" status="less than"/>
        <end position="5"/>
    </location>
</feature>
<feature type="peptide" id="PRO_5000666523" description="Conotoxin Cal22d" evidence="3">
    <location>
        <begin position="7"/>
        <end position="53"/>
    </location>
</feature>
<feature type="non-terminal residue">
    <location>
        <position position="1"/>
    </location>
</feature>
<proteinExistence type="evidence at transcript level"/>
<name>CUMD_CONCL</name>
<accession>D3JWK5</accession>
<sequence>GRPSARYDAPYCSQEEVRECQDDCSGNAVRDSCLCAYDPAGSPACECRCVEPWRR</sequence>
<reference key="1">
    <citation type="journal article" date="2011" name="Toxicon">
        <title>Diversity of conotoxin types from Conus californicus reflects a diversity of prey types and a novel evolutionary history.</title>
        <authorList>
            <person name="Elliger C.A."/>
            <person name="Richmond T.A."/>
            <person name="Lebaric Z.N."/>
            <person name="Pierce N.T."/>
            <person name="Sweedler J.V."/>
            <person name="Gilly W.F."/>
        </authorList>
    </citation>
    <scope>NUCLEOTIDE SEQUENCE [MRNA]</scope>
    <source>
        <tissue>Venom duct</tissue>
    </source>
</reference>
<keyword id="KW-1015">Disulfide bond</keyword>
<keyword id="KW-0872">Ion channel impairing toxin</keyword>
<keyword id="KW-0528">Neurotoxin</keyword>
<keyword id="KW-0964">Secreted</keyword>
<keyword id="KW-0800">Toxin</keyword>
<protein>
    <recommendedName>
        <fullName evidence="1">Conotoxin Cal22d</fullName>
    </recommendedName>
</protein>
<evidence type="ECO:0000303" key="1">
    <source>
    </source>
</evidence>
<evidence type="ECO:0000305" key="2"/>
<evidence type="ECO:0000305" key="3">
    <source>
    </source>
</evidence>
<comment type="function">
    <text evidence="2">Probable neurotoxin with unknown target. Possibly targets ion channels.</text>
</comment>
<comment type="subcellular location">
    <subcellularLocation>
        <location evidence="3">Secreted</location>
    </subcellularLocation>
</comment>
<comment type="tissue specificity">
    <text evidence="3">Expressed by the venom duct.</text>
</comment>
<comment type="domain">
    <text>The cysteine framework is XXII (C-C-C-C-C-C-C-C).</text>
</comment>
<comment type="PTM">
    <text evidence="2">Contains 4 disulfide bonds.</text>
</comment>
<dbReference type="EMBL" id="GU324077">
    <property type="protein sequence ID" value="ADB95949.1"/>
    <property type="molecule type" value="mRNA"/>
</dbReference>
<dbReference type="SMR" id="D3JWK5"/>
<dbReference type="ConoServer" id="4052">
    <property type="toxin name" value="Cal22d precursor"/>
</dbReference>
<dbReference type="GO" id="GO:0005576">
    <property type="term" value="C:extracellular region"/>
    <property type="evidence" value="ECO:0007669"/>
    <property type="project" value="UniProtKB-SubCell"/>
</dbReference>
<dbReference type="GO" id="GO:0099106">
    <property type="term" value="F:ion channel regulator activity"/>
    <property type="evidence" value="ECO:0007669"/>
    <property type="project" value="UniProtKB-KW"/>
</dbReference>
<dbReference type="GO" id="GO:0090729">
    <property type="term" value="F:toxin activity"/>
    <property type="evidence" value="ECO:0007669"/>
    <property type="project" value="UniProtKB-KW"/>
</dbReference>